<comment type="function">
    <text evidence="1">Catalyzes the hydrolytic cleavage of the carbon-nitrogen bond in imidazolone-5-propanoate to yield N-formimidoyl-L-glutamate. It is the third step in the universal histidine degradation pathway.</text>
</comment>
<comment type="catalytic activity">
    <reaction evidence="1">
        <text>4-imidazolone-5-propanoate + H2O = N-formimidoyl-L-glutamate</text>
        <dbReference type="Rhea" id="RHEA:23660"/>
        <dbReference type="ChEBI" id="CHEBI:15377"/>
        <dbReference type="ChEBI" id="CHEBI:58928"/>
        <dbReference type="ChEBI" id="CHEBI:77893"/>
        <dbReference type="EC" id="3.5.2.7"/>
    </reaction>
</comment>
<comment type="cofactor">
    <cofactor evidence="1">
        <name>Zn(2+)</name>
        <dbReference type="ChEBI" id="CHEBI:29105"/>
    </cofactor>
    <cofactor evidence="1">
        <name>Fe(3+)</name>
        <dbReference type="ChEBI" id="CHEBI:29034"/>
    </cofactor>
    <text evidence="1">Binds 1 zinc or iron ion per subunit.</text>
</comment>
<comment type="pathway">
    <text evidence="1">Amino-acid degradation; L-histidine degradation into L-glutamate; N-formimidoyl-L-glutamate from L-histidine: step 3/3.</text>
</comment>
<comment type="subcellular location">
    <subcellularLocation>
        <location evidence="1">Cytoplasm</location>
    </subcellularLocation>
</comment>
<comment type="similarity">
    <text evidence="1">Belongs to the metallo-dependent hydrolases superfamily. HutI family.</text>
</comment>
<protein>
    <recommendedName>
        <fullName evidence="1">Imidazolonepropionase</fullName>
        <ecNumber evidence="1">3.5.2.7</ecNumber>
    </recommendedName>
    <alternativeName>
        <fullName evidence="1">Imidazolone-5-propionate hydrolase</fullName>
    </alternativeName>
</protein>
<reference key="1">
    <citation type="journal article" date="2006" name="Environ. Microbiol.">
        <title>Whole genome analysis of the marine Bacteroidetes'Gramella forsetii' reveals adaptations to degradation of polymeric organic matter.</title>
        <authorList>
            <person name="Bauer M."/>
            <person name="Kube M."/>
            <person name="Teeling H."/>
            <person name="Richter M."/>
            <person name="Lombardot T."/>
            <person name="Allers E."/>
            <person name="Wuerdemann C.A."/>
            <person name="Quast C."/>
            <person name="Kuhl H."/>
            <person name="Knaust F."/>
            <person name="Woebken D."/>
            <person name="Bischof K."/>
            <person name="Mussmann M."/>
            <person name="Choudhuri J.V."/>
            <person name="Meyer F."/>
            <person name="Reinhardt R."/>
            <person name="Amann R.I."/>
            <person name="Gloeckner F.O."/>
        </authorList>
    </citation>
    <scope>NUCLEOTIDE SEQUENCE [LARGE SCALE GENOMIC DNA]</scope>
    <source>
        <strain>DSM 17595 / CGMCC 1.15422 / KT0803</strain>
    </source>
</reference>
<evidence type="ECO:0000255" key="1">
    <source>
        <dbReference type="HAMAP-Rule" id="MF_00372"/>
    </source>
</evidence>
<keyword id="KW-0963">Cytoplasm</keyword>
<keyword id="KW-0369">Histidine metabolism</keyword>
<keyword id="KW-0378">Hydrolase</keyword>
<keyword id="KW-0408">Iron</keyword>
<keyword id="KW-0479">Metal-binding</keyword>
<keyword id="KW-0862">Zinc</keyword>
<accession>A0LZE0</accession>
<dbReference type="EC" id="3.5.2.7" evidence="1"/>
<dbReference type="EMBL" id="CU207366">
    <property type="protein sequence ID" value="CAL65735.1"/>
    <property type="molecule type" value="Genomic_DNA"/>
</dbReference>
<dbReference type="RefSeq" id="WP_011708672.1">
    <property type="nucleotide sequence ID" value="NC_008571.1"/>
</dbReference>
<dbReference type="SMR" id="A0LZE0"/>
<dbReference type="STRING" id="411154.GFO_0758"/>
<dbReference type="KEGG" id="gfo:GFO_0758"/>
<dbReference type="eggNOG" id="COG1228">
    <property type="taxonomic scope" value="Bacteria"/>
</dbReference>
<dbReference type="HOGENOM" id="CLU_041647_0_1_10"/>
<dbReference type="OrthoDB" id="9776455at2"/>
<dbReference type="UniPathway" id="UPA00379">
    <property type="reaction ID" value="UER00551"/>
</dbReference>
<dbReference type="Proteomes" id="UP000000755">
    <property type="component" value="Chromosome"/>
</dbReference>
<dbReference type="GO" id="GO:0005737">
    <property type="term" value="C:cytoplasm"/>
    <property type="evidence" value="ECO:0007669"/>
    <property type="project" value="UniProtKB-SubCell"/>
</dbReference>
<dbReference type="GO" id="GO:0050480">
    <property type="term" value="F:imidazolonepropionase activity"/>
    <property type="evidence" value="ECO:0007669"/>
    <property type="project" value="UniProtKB-UniRule"/>
</dbReference>
<dbReference type="GO" id="GO:0005506">
    <property type="term" value="F:iron ion binding"/>
    <property type="evidence" value="ECO:0007669"/>
    <property type="project" value="UniProtKB-UniRule"/>
</dbReference>
<dbReference type="GO" id="GO:0008270">
    <property type="term" value="F:zinc ion binding"/>
    <property type="evidence" value="ECO:0007669"/>
    <property type="project" value="UniProtKB-UniRule"/>
</dbReference>
<dbReference type="GO" id="GO:0019556">
    <property type="term" value="P:L-histidine catabolic process to glutamate and formamide"/>
    <property type="evidence" value="ECO:0007669"/>
    <property type="project" value="UniProtKB-UniPathway"/>
</dbReference>
<dbReference type="GO" id="GO:0019557">
    <property type="term" value="P:L-histidine catabolic process to glutamate and formate"/>
    <property type="evidence" value="ECO:0007669"/>
    <property type="project" value="UniProtKB-UniPathway"/>
</dbReference>
<dbReference type="CDD" id="cd01296">
    <property type="entry name" value="Imidazolone-5PH"/>
    <property type="match status" value="1"/>
</dbReference>
<dbReference type="FunFam" id="3.20.20.140:FF:000007">
    <property type="entry name" value="Imidazolonepropionase"/>
    <property type="match status" value="1"/>
</dbReference>
<dbReference type="Gene3D" id="3.20.20.140">
    <property type="entry name" value="Metal-dependent hydrolases"/>
    <property type="match status" value="1"/>
</dbReference>
<dbReference type="Gene3D" id="2.30.40.10">
    <property type="entry name" value="Urease, subunit C, domain 1"/>
    <property type="match status" value="1"/>
</dbReference>
<dbReference type="HAMAP" id="MF_00372">
    <property type="entry name" value="HutI"/>
    <property type="match status" value="1"/>
</dbReference>
<dbReference type="InterPro" id="IPR006680">
    <property type="entry name" value="Amidohydro-rel"/>
</dbReference>
<dbReference type="InterPro" id="IPR005920">
    <property type="entry name" value="HutI"/>
</dbReference>
<dbReference type="InterPro" id="IPR011059">
    <property type="entry name" value="Metal-dep_hydrolase_composite"/>
</dbReference>
<dbReference type="InterPro" id="IPR032466">
    <property type="entry name" value="Metal_Hydrolase"/>
</dbReference>
<dbReference type="NCBIfam" id="TIGR01224">
    <property type="entry name" value="hutI"/>
    <property type="match status" value="1"/>
</dbReference>
<dbReference type="PANTHER" id="PTHR42752">
    <property type="entry name" value="IMIDAZOLONEPROPIONASE"/>
    <property type="match status" value="1"/>
</dbReference>
<dbReference type="PANTHER" id="PTHR42752:SF1">
    <property type="entry name" value="IMIDAZOLONEPROPIONASE-RELATED"/>
    <property type="match status" value="1"/>
</dbReference>
<dbReference type="Pfam" id="PF01979">
    <property type="entry name" value="Amidohydro_1"/>
    <property type="match status" value="1"/>
</dbReference>
<dbReference type="SUPFAM" id="SSF51338">
    <property type="entry name" value="Composite domain of metallo-dependent hydrolases"/>
    <property type="match status" value="1"/>
</dbReference>
<dbReference type="SUPFAM" id="SSF51556">
    <property type="entry name" value="Metallo-dependent hydrolases"/>
    <property type="match status" value="1"/>
</dbReference>
<feature type="chain" id="PRO_0000306464" description="Imidazolonepropionase">
    <location>
        <begin position="1"/>
        <end position="411"/>
    </location>
</feature>
<feature type="binding site" evidence="1">
    <location>
        <position position="78"/>
    </location>
    <ligand>
        <name>Fe(3+)</name>
        <dbReference type="ChEBI" id="CHEBI:29034"/>
    </ligand>
</feature>
<feature type="binding site" evidence="1">
    <location>
        <position position="78"/>
    </location>
    <ligand>
        <name>Zn(2+)</name>
        <dbReference type="ChEBI" id="CHEBI:29105"/>
    </ligand>
</feature>
<feature type="binding site" evidence="1">
    <location>
        <position position="80"/>
    </location>
    <ligand>
        <name>Fe(3+)</name>
        <dbReference type="ChEBI" id="CHEBI:29034"/>
    </ligand>
</feature>
<feature type="binding site" evidence="1">
    <location>
        <position position="80"/>
    </location>
    <ligand>
        <name>Zn(2+)</name>
        <dbReference type="ChEBI" id="CHEBI:29105"/>
    </ligand>
</feature>
<feature type="binding site" evidence="1">
    <location>
        <position position="87"/>
    </location>
    <ligand>
        <name>4-imidazolone-5-propanoate</name>
        <dbReference type="ChEBI" id="CHEBI:77893"/>
    </ligand>
</feature>
<feature type="binding site" evidence="1">
    <location>
        <position position="150"/>
    </location>
    <ligand>
        <name>4-imidazolone-5-propanoate</name>
        <dbReference type="ChEBI" id="CHEBI:77893"/>
    </ligand>
</feature>
<feature type="binding site" evidence="1">
    <location>
        <position position="150"/>
    </location>
    <ligand>
        <name>N-formimidoyl-L-glutamate</name>
        <dbReference type="ChEBI" id="CHEBI:58928"/>
    </ligand>
</feature>
<feature type="binding site" evidence="1">
    <location>
        <position position="183"/>
    </location>
    <ligand>
        <name>4-imidazolone-5-propanoate</name>
        <dbReference type="ChEBI" id="CHEBI:77893"/>
    </ligand>
</feature>
<feature type="binding site" evidence="1">
    <location>
        <position position="248"/>
    </location>
    <ligand>
        <name>Fe(3+)</name>
        <dbReference type="ChEBI" id="CHEBI:29034"/>
    </ligand>
</feature>
<feature type="binding site" evidence="1">
    <location>
        <position position="248"/>
    </location>
    <ligand>
        <name>Zn(2+)</name>
        <dbReference type="ChEBI" id="CHEBI:29105"/>
    </ligand>
</feature>
<feature type="binding site" evidence="1">
    <location>
        <position position="251"/>
    </location>
    <ligand>
        <name>4-imidazolone-5-propanoate</name>
        <dbReference type="ChEBI" id="CHEBI:77893"/>
    </ligand>
</feature>
<feature type="binding site" evidence="1">
    <location>
        <position position="322"/>
    </location>
    <ligand>
        <name>Fe(3+)</name>
        <dbReference type="ChEBI" id="CHEBI:29034"/>
    </ligand>
</feature>
<feature type="binding site" evidence="1">
    <location>
        <position position="322"/>
    </location>
    <ligand>
        <name>Zn(2+)</name>
        <dbReference type="ChEBI" id="CHEBI:29105"/>
    </ligand>
</feature>
<feature type="binding site" evidence="1">
    <location>
        <position position="324"/>
    </location>
    <ligand>
        <name>N-formimidoyl-L-glutamate</name>
        <dbReference type="ChEBI" id="CHEBI:58928"/>
    </ligand>
</feature>
<feature type="binding site" evidence="1">
    <location>
        <position position="326"/>
    </location>
    <ligand>
        <name>N-formimidoyl-L-glutamate</name>
        <dbReference type="ChEBI" id="CHEBI:58928"/>
    </ligand>
</feature>
<feature type="binding site" evidence="1">
    <location>
        <position position="327"/>
    </location>
    <ligand>
        <name>4-imidazolone-5-propanoate</name>
        <dbReference type="ChEBI" id="CHEBI:77893"/>
    </ligand>
</feature>
<gene>
    <name evidence="1" type="primary">hutI</name>
    <name type="ordered locus">GFO_0758</name>
</gene>
<name>HUTI_CHRFK</name>
<sequence>MTLLVTNIKELLQVREQNILKVSGSEMKELPTIKNAWLLIENDKIADFGTMKNMPKITADQTIDATGKIVLPTWCDSHTHIVYAGNREQEFADRINGLSYEEIANRGGGILNSVKTLQDTSEEEVYEQSAKRLKEVMKLGTGAVEIKSGYGLTEKAELKMLRVIKKLRENYDLPVKSTFLGAHAIPKEYKNDPDAYMDLVINEILPKVAKEGLAEYIDIFCEKGYFSIKDTHRLLSAAKEHGLKPKIHVNQFNSIGGVKVGVEHEALSVDHLEVMNDEDIEVLKGTRTMPVALPSCSLFLSIPYTPARKILDAELPLALATDFNPGSTPSGNMNLVVSLACIKMKMTPEEAINAATINGAYAMDLSETHGSITKGKMANFMITKEIPSFTFLPYAFGTNSIDSVYINGKLI</sequence>
<proteinExistence type="inferred from homology"/>
<organism>
    <name type="scientific">Christiangramia forsetii (strain DSM 17595 / CGMCC 1.15422 / KT0803)</name>
    <name type="common">Gramella forsetii</name>
    <dbReference type="NCBI Taxonomy" id="411154"/>
    <lineage>
        <taxon>Bacteria</taxon>
        <taxon>Pseudomonadati</taxon>
        <taxon>Bacteroidota</taxon>
        <taxon>Flavobacteriia</taxon>
        <taxon>Flavobacteriales</taxon>
        <taxon>Flavobacteriaceae</taxon>
        <taxon>Christiangramia</taxon>
    </lineage>
</organism>